<sequence length="500" mass="54730">MQDQYILALDQGTTSSRAMLFDRQGNIVSIAQKEFEQIYPQPGWVEHDPQEIWSTQAGVAAEAVTRTGLNGTSIAAIGITNQRETTIVWDRETGQPVYNAIVWQDRRTADFCDSLKKQGLEAKVRAKTGLPIDSYFSATKIRWILDNVPGARDKARQGKLAFGTVDSWLVWNFTKHELHVTDVTNASRTMLFNIHTRQWDDELLELLDIPRSMLPEVKASSEIYGHTKTTVFASKIPLAGIAGDQHAALFGQMCTTSGMVKNTYGTGCFLMMNTGDKPIESKNNLVTTIAWQIGDDVQYALEGSIFIAGAVVQWLRDGLGIIKTAAEIEALAASVPHSDGVYLVPAFAGLGAPHWNARARGSLFGVTRGTRDAHLARAALDAIAYQSLDVLAAMEADSGLSIGELRVDGGASANNLLMQFQADLLGVDAVRPQITETTALGAAYLAGLAIGYWKNLDEVRSQWQLDRRFAPSMPKQQVERCMAGWQRAVRAAKAWADDAQ</sequence>
<protein>
    <recommendedName>
        <fullName evidence="1">Glycerol kinase</fullName>
        <ecNumber evidence="1">2.7.1.30</ecNumber>
    </recommendedName>
    <alternativeName>
        <fullName evidence="1">ATP:glycerol 3-phosphotransferase</fullName>
    </alternativeName>
    <alternativeName>
        <fullName evidence="1">Glycerokinase</fullName>
        <shortName evidence="1">GK</shortName>
    </alternativeName>
</protein>
<keyword id="KW-0067">ATP-binding</keyword>
<keyword id="KW-0319">Glycerol metabolism</keyword>
<keyword id="KW-0418">Kinase</keyword>
<keyword id="KW-0547">Nucleotide-binding</keyword>
<keyword id="KW-1185">Reference proteome</keyword>
<keyword id="KW-0808">Transferase</keyword>
<proteinExistence type="inferred from homology"/>
<name>GLPK_BURM1</name>
<comment type="function">
    <text evidence="1">Key enzyme in the regulation of glycerol uptake and metabolism. Catalyzes the phosphorylation of glycerol to yield sn-glycerol 3-phosphate.</text>
</comment>
<comment type="catalytic activity">
    <reaction evidence="1">
        <text>glycerol + ATP = sn-glycerol 3-phosphate + ADP + H(+)</text>
        <dbReference type="Rhea" id="RHEA:21644"/>
        <dbReference type="ChEBI" id="CHEBI:15378"/>
        <dbReference type="ChEBI" id="CHEBI:17754"/>
        <dbReference type="ChEBI" id="CHEBI:30616"/>
        <dbReference type="ChEBI" id="CHEBI:57597"/>
        <dbReference type="ChEBI" id="CHEBI:456216"/>
        <dbReference type="EC" id="2.7.1.30"/>
    </reaction>
</comment>
<comment type="activity regulation">
    <text evidence="1">Inhibited by fructose 1,6-bisphosphate (FBP).</text>
</comment>
<comment type="pathway">
    <text evidence="1">Polyol metabolism; glycerol degradation via glycerol kinase pathway; sn-glycerol 3-phosphate from glycerol: step 1/1.</text>
</comment>
<comment type="similarity">
    <text evidence="1">Belongs to the FGGY kinase family.</text>
</comment>
<reference key="1">
    <citation type="submission" date="2007-10" db="EMBL/GenBank/DDBJ databases">
        <title>Complete sequence of chromosome 1 of Burkholderia multivorans ATCC 17616.</title>
        <authorList>
            <person name="Copeland A."/>
            <person name="Lucas S."/>
            <person name="Lapidus A."/>
            <person name="Barry K."/>
            <person name="Glavina del Rio T."/>
            <person name="Dalin E."/>
            <person name="Tice H."/>
            <person name="Pitluck S."/>
            <person name="Chain P."/>
            <person name="Malfatti S."/>
            <person name="Shin M."/>
            <person name="Vergez L."/>
            <person name="Schmutz J."/>
            <person name="Larimer F."/>
            <person name="Land M."/>
            <person name="Hauser L."/>
            <person name="Kyrpides N."/>
            <person name="Kim E."/>
            <person name="Tiedje J."/>
            <person name="Richardson P."/>
        </authorList>
    </citation>
    <scope>NUCLEOTIDE SEQUENCE [LARGE SCALE GENOMIC DNA]</scope>
    <source>
        <strain>ATCC 17616 / 249</strain>
    </source>
</reference>
<reference key="2">
    <citation type="submission" date="2007-04" db="EMBL/GenBank/DDBJ databases">
        <title>Complete genome sequence of Burkholderia multivorans ATCC 17616.</title>
        <authorList>
            <person name="Ohtsubo Y."/>
            <person name="Yamashita A."/>
            <person name="Kurokawa K."/>
            <person name="Takami H."/>
            <person name="Yuhara S."/>
            <person name="Nishiyama E."/>
            <person name="Endo R."/>
            <person name="Miyazaki R."/>
            <person name="Ono A."/>
            <person name="Yano K."/>
            <person name="Ito M."/>
            <person name="Sota M."/>
            <person name="Yuji N."/>
            <person name="Hattori M."/>
            <person name="Tsuda M."/>
        </authorList>
    </citation>
    <scope>NUCLEOTIDE SEQUENCE [LARGE SCALE GENOMIC DNA]</scope>
    <source>
        <strain>ATCC 17616 / 249</strain>
    </source>
</reference>
<organism>
    <name type="scientific">Burkholderia multivorans (strain ATCC 17616 / 249)</name>
    <dbReference type="NCBI Taxonomy" id="395019"/>
    <lineage>
        <taxon>Bacteria</taxon>
        <taxon>Pseudomonadati</taxon>
        <taxon>Pseudomonadota</taxon>
        <taxon>Betaproteobacteria</taxon>
        <taxon>Burkholderiales</taxon>
        <taxon>Burkholderiaceae</taxon>
        <taxon>Burkholderia</taxon>
        <taxon>Burkholderia cepacia complex</taxon>
    </lineage>
</organism>
<evidence type="ECO:0000255" key="1">
    <source>
        <dbReference type="HAMAP-Rule" id="MF_00186"/>
    </source>
</evidence>
<dbReference type="EC" id="2.7.1.30" evidence="1"/>
<dbReference type="EMBL" id="CP000868">
    <property type="protein sequence ID" value="ABX14314.1"/>
    <property type="molecule type" value="Genomic_DNA"/>
</dbReference>
<dbReference type="EMBL" id="AP009385">
    <property type="protein sequence ID" value="BAG44531.1"/>
    <property type="molecule type" value="Genomic_DNA"/>
</dbReference>
<dbReference type="RefSeq" id="WP_006398356.1">
    <property type="nucleotide sequence ID" value="NC_010804.1"/>
</dbReference>
<dbReference type="SMR" id="A9AFH2"/>
<dbReference type="STRING" id="395019.BMULJ_02641"/>
<dbReference type="KEGG" id="bmj:BMULJ_02641"/>
<dbReference type="KEGG" id="bmu:Bmul_0619"/>
<dbReference type="eggNOG" id="COG0554">
    <property type="taxonomic scope" value="Bacteria"/>
</dbReference>
<dbReference type="HOGENOM" id="CLU_009281_2_3_4"/>
<dbReference type="UniPathway" id="UPA00618">
    <property type="reaction ID" value="UER00672"/>
</dbReference>
<dbReference type="Proteomes" id="UP000008815">
    <property type="component" value="Chromosome 1"/>
</dbReference>
<dbReference type="GO" id="GO:0005829">
    <property type="term" value="C:cytosol"/>
    <property type="evidence" value="ECO:0007669"/>
    <property type="project" value="TreeGrafter"/>
</dbReference>
<dbReference type="GO" id="GO:0005524">
    <property type="term" value="F:ATP binding"/>
    <property type="evidence" value="ECO:0007669"/>
    <property type="project" value="UniProtKB-UniRule"/>
</dbReference>
<dbReference type="GO" id="GO:0004370">
    <property type="term" value="F:glycerol kinase activity"/>
    <property type="evidence" value="ECO:0000250"/>
    <property type="project" value="UniProtKB"/>
</dbReference>
<dbReference type="GO" id="GO:0019563">
    <property type="term" value="P:glycerol catabolic process"/>
    <property type="evidence" value="ECO:0007669"/>
    <property type="project" value="UniProtKB-UniRule"/>
</dbReference>
<dbReference type="GO" id="GO:0006071">
    <property type="term" value="P:glycerol metabolic process"/>
    <property type="evidence" value="ECO:0000250"/>
    <property type="project" value="UniProtKB"/>
</dbReference>
<dbReference type="GO" id="GO:0006072">
    <property type="term" value="P:glycerol-3-phosphate metabolic process"/>
    <property type="evidence" value="ECO:0007669"/>
    <property type="project" value="InterPro"/>
</dbReference>
<dbReference type="CDD" id="cd07786">
    <property type="entry name" value="FGGY_EcGK_like"/>
    <property type="match status" value="1"/>
</dbReference>
<dbReference type="FunFam" id="3.30.420.40:FF:000007">
    <property type="entry name" value="Glycerol kinase"/>
    <property type="match status" value="1"/>
</dbReference>
<dbReference type="FunFam" id="3.30.420.40:FF:000008">
    <property type="entry name" value="Glycerol kinase"/>
    <property type="match status" value="1"/>
</dbReference>
<dbReference type="Gene3D" id="3.30.420.40">
    <property type="match status" value="2"/>
</dbReference>
<dbReference type="HAMAP" id="MF_00186">
    <property type="entry name" value="Glycerol_kin"/>
    <property type="match status" value="1"/>
</dbReference>
<dbReference type="InterPro" id="IPR043129">
    <property type="entry name" value="ATPase_NBD"/>
</dbReference>
<dbReference type="InterPro" id="IPR000577">
    <property type="entry name" value="Carb_kinase_FGGY"/>
</dbReference>
<dbReference type="InterPro" id="IPR018483">
    <property type="entry name" value="Carb_kinase_FGGY_CS"/>
</dbReference>
<dbReference type="InterPro" id="IPR018485">
    <property type="entry name" value="FGGY_C"/>
</dbReference>
<dbReference type="InterPro" id="IPR018484">
    <property type="entry name" value="FGGY_N"/>
</dbReference>
<dbReference type="InterPro" id="IPR005999">
    <property type="entry name" value="Glycerol_kin"/>
</dbReference>
<dbReference type="NCBIfam" id="TIGR01311">
    <property type="entry name" value="glycerol_kin"/>
    <property type="match status" value="1"/>
</dbReference>
<dbReference type="NCBIfam" id="NF000756">
    <property type="entry name" value="PRK00047.1"/>
    <property type="match status" value="1"/>
</dbReference>
<dbReference type="PANTHER" id="PTHR10196:SF69">
    <property type="entry name" value="GLYCEROL KINASE"/>
    <property type="match status" value="1"/>
</dbReference>
<dbReference type="PANTHER" id="PTHR10196">
    <property type="entry name" value="SUGAR KINASE"/>
    <property type="match status" value="1"/>
</dbReference>
<dbReference type="Pfam" id="PF02782">
    <property type="entry name" value="FGGY_C"/>
    <property type="match status" value="1"/>
</dbReference>
<dbReference type="Pfam" id="PF00370">
    <property type="entry name" value="FGGY_N"/>
    <property type="match status" value="1"/>
</dbReference>
<dbReference type="PIRSF" id="PIRSF000538">
    <property type="entry name" value="GlpK"/>
    <property type="match status" value="1"/>
</dbReference>
<dbReference type="SUPFAM" id="SSF53067">
    <property type="entry name" value="Actin-like ATPase domain"/>
    <property type="match status" value="2"/>
</dbReference>
<dbReference type="PROSITE" id="PS00933">
    <property type="entry name" value="FGGY_KINASES_1"/>
    <property type="match status" value="1"/>
</dbReference>
<dbReference type="PROSITE" id="PS00445">
    <property type="entry name" value="FGGY_KINASES_2"/>
    <property type="match status" value="1"/>
</dbReference>
<feature type="chain" id="PRO_1000098721" description="Glycerol kinase">
    <location>
        <begin position="1"/>
        <end position="500"/>
    </location>
</feature>
<feature type="binding site" evidence="1">
    <location>
        <position position="13"/>
    </location>
    <ligand>
        <name>ADP</name>
        <dbReference type="ChEBI" id="CHEBI:456216"/>
    </ligand>
</feature>
<feature type="binding site" evidence="1">
    <location>
        <position position="13"/>
    </location>
    <ligand>
        <name>ATP</name>
        <dbReference type="ChEBI" id="CHEBI:30616"/>
    </ligand>
</feature>
<feature type="binding site" evidence="1">
    <location>
        <position position="13"/>
    </location>
    <ligand>
        <name>sn-glycerol 3-phosphate</name>
        <dbReference type="ChEBI" id="CHEBI:57597"/>
    </ligand>
</feature>
<feature type="binding site" evidence="1">
    <location>
        <position position="14"/>
    </location>
    <ligand>
        <name>ATP</name>
        <dbReference type="ChEBI" id="CHEBI:30616"/>
    </ligand>
</feature>
<feature type="binding site" evidence="1">
    <location>
        <position position="15"/>
    </location>
    <ligand>
        <name>ATP</name>
        <dbReference type="ChEBI" id="CHEBI:30616"/>
    </ligand>
</feature>
<feature type="binding site" evidence="1">
    <location>
        <position position="17"/>
    </location>
    <ligand>
        <name>ADP</name>
        <dbReference type="ChEBI" id="CHEBI:456216"/>
    </ligand>
</feature>
<feature type="binding site" evidence="1">
    <location>
        <position position="83"/>
    </location>
    <ligand>
        <name>glycerol</name>
        <dbReference type="ChEBI" id="CHEBI:17754"/>
    </ligand>
</feature>
<feature type="binding site" evidence="1">
    <location>
        <position position="83"/>
    </location>
    <ligand>
        <name>sn-glycerol 3-phosphate</name>
        <dbReference type="ChEBI" id="CHEBI:57597"/>
    </ligand>
</feature>
<feature type="binding site" evidence="1">
    <location>
        <position position="84"/>
    </location>
    <ligand>
        <name>glycerol</name>
        <dbReference type="ChEBI" id="CHEBI:17754"/>
    </ligand>
</feature>
<feature type="binding site" evidence="1">
    <location>
        <position position="84"/>
    </location>
    <ligand>
        <name>sn-glycerol 3-phosphate</name>
        <dbReference type="ChEBI" id="CHEBI:57597"/>
    </ligand>
</feature>
<feature type="binding site" evidence="1">
    <location>
        <position position="135"/>
    </location>
    <ligand>
        <name>glycerol</name>
        <dbReference type="ChEBI" id="CHEBI:17754"/>
    </ligand>
</feature>
<feature type="binding site" evidence="1">
    <location>
        <position position="135"/>
    </location>
    <ligand>
        <name>sn-glycerol 3-phosphate</name>
        <dbReference type="ChEBI" id="CHEBI:57597"/>
    </ligand>
</feature>
<feature type="binding site" evidence="1">
    <location>
        <position position="244"/>
    </location>
    <ligand>
        <name>glycerol</name>
        <dbReference type="ChEBI" id="CHEBI:17754"/>
    </ligand>
</feature>
<feature type="binding site" evidence="1">
    <location>
        <position position="244"/>
    </location>
    <ligand>
        <name>sn-glycerol 3-phosphate</name>
        <dbReference type="ChEBI" id="CHEBI:57597"/>
    </ligand>
</feature>
<feature type="binding site" evidence="1">
    <location>
        <position position="245"/>
    </location>
    <ligand>
        <name>glycerol</name>
        <dbReference type="ChEBI" id="CHEBI:17754"/>
    </ligand>
</feature>
<feature type="binding site" evidence="1">
    <location>
        <position position="266"/>
    </location>
    <ligand>
        <name>ADP</name>
        <dbReference type="ChEBI" id="CHEBI:456216"/>
    </ligand>
</feature>
<feature type="binding site" evidence="1">
    <location>
        <position position="266"/>
    </location>
    <ligand>
        <name>ATP</name>
        <dbReference type="ChEBI" id="CHEBI:30616"/>
    </ligand>
</feature>
<feature type="binding site" evidence="1">
    <location>
        <position position="309"/>
    </location>
    <ligand>
        <name>ADP</name>
        <dbReference type="ChEBI" id="CHEBI:456216"/>
    </ligand>
</feature>
<feature type="binding site" evidence="1">
    <location>
        <position position="309"/>
    </location>
    <ligand>
        <name>ATP</name>
        <dbReference type="ChEBI" id="CHEBI:30616"/>
    </ligand>
</feature>
<feature type="binding site" evidence="1">
    <location>
        <position position="313"/>
    </location>
    <ligand>
        <name>ATP</name>
        <dbReference type="ChEBI" id="CHEBI:30616"/>
    </ligand>
</feature>
<feature type="binding site" evidence="1">
    <location>
        <position position="410"/>
    </location>
    <ligand>
        <name>ADP</name>
        <dbReference type="ChEBI" id="CHEBI:456216"/>
    </ligand>
</feature>
<feature type="binding site" evidence="1">
    <location>
        <position position="410"/>
    </location>
    <ligand>
        <name>ATP</name>
        <dbReference type="ChEBI" id="CHEBI:30616"/>
    </ligand>
</feature>
<feature type="binding site" evidence="1">
    <location>
        <position position="414"/>
    </location>
    <ligand>
        <name>ADP</name>
        <dbReference type="ChEBI" id="CHEBI:456216"/>
    </ligand>
</feature>
<accession>A9AFH2</accession>
<gene>
    <name evidence="1" type="primary">glpK</name>
    <name type="ordered locus">Bmul_0619</name>
    <name type="ordered locus">BMULJ_02641</name>
</gene>